<evidence type="ECO:0000250" key="1">
    <source>
        <dbReference type="UniProtKB" id="P01942"/>
    </source>
</evidence>
<evidence type="ECO:0000250" key="2">
    <source>
        <dbReference type="UniProtKB" id="P01946"/>
    </source>
</evidence>
<evidence type="ECO:0000250" key="3">
    <source>
        <dbReference type="UniProtKB" id="P69905"/>
    </source>
</evidence>
<evidence type="ECO:0000255" key="4">
    <source>
        <dbReference type="PROSITE-ProRule" id="PRU00238"/>
    </source>
</evidence>
<evidence type="ECO:0000269" key="5">
    <source>
    </source>
</evidence>
<gene>
    <name type="primary">HBA</name>
</gene>
<organism>
    <name type="scientific">Panthera onca</name>
    <name type="common">Jaguar</name>
    <name type="synonym">Felis onca</name>
    <dbReference type="NCBI Taxonomy" id="9690"/>
    <lineage>
        <taxon>Eukaryota</taxon>
        <taxon>Metazoa</taxon>
        <taxon>Chordata</taxon>
        <taxon>Craniata</taxon>
        <taxon>Vertebrata</taxon>
        <taxon>Euteleostomi</taxon>
        <taxon>Mammalia</taxon>
        <taxon>Eutheria</taxon>
        <taxon>Laurasiatheria</taxon>
        <taxon>Carnivora</taxon>
        <taxon>Feliformia</taxon>
        <taxon>Felidae</taxon>
        <taxon>Pantherinae</taxon>
        <taxon>Panthera</taxon>
    </lineage>
</organism>
<proteinExistence type="evidence at protein level"/>
<comment type="function">
    <text>Involved in oxygen transport from the lung to the various peripheral tissues.</text>
</comment>
<comment type="function">
    <molecule>Hemopressin</molecule>
    <text evidence="2">Hemopressin acts as an antagonist peptide of the cannabinoid receptor CNR1. Hemopressin-binding efficiently blocks cannabinoid receptor CNR1 and subsequent signaling.</text>
</comment>
<comment type="subunit">
    <text>Heterotetramer of two alpha chains and two beta chains.</text>
</comment>
<comment type="tissue specificity">
    <text>Red blood cells.</text>
</comment>
<comment type="similarity">
    <text evidence="4">Belongs to the globin family.</text>
</comment>
<sequence length="142" mass="15558">MVLSSADKNNVKACWGKIGSHAGEYGAEALERTFCSFPTTKTYFPHFDLSHGSAQVQAHGQKVADALTKAVAHINDLPNALSDLSDLHAYKLRVDPVNFKFLSHCLLVTLACHHPEEFTPAVHASLDKFFSAVSTVLTSKYR</sequence>
<keyword id="KW-0007">Acetylation</keyword>
<keyword id="KW-0903">Direct protein sequencing</keyword>
<keyword id="KW-0349">Heme</keyword>
<keyword id="KW-0408">Iron</keyword>
<keyword id="KW-0479">Metal-binding</keyword>
<keyword id="KW-0561">Oxygen transport</keyword>
<keyword id="KW-0597">Phosphoprotein</keyword>
<keyword id="KW-0813">Transport</keyword>
<accession>P63109</accession>
<accession>P04236</accession>
<feature type="initiator methionine" description="Removed" evidence="5">
    <location>
        <position position="1"/>
    </location>
</feature>
<feature type="chain" id="PRO_0000052716" description="Hemoglobin subunit alpha">
    <location>
        <begin position="2"/>
        <end position="142"/>
    </location>
</feature>
<feature type="peptide" id="PRO_0000455916" description="Hemopressin" evidence="2">
    <location>
        <begin position="96"/>
        <end position="104"/>
    </location>
</feature>
<feature type="domain" description="Globin" evidence="4">
    <location>
        <begin position="2"/>
        <end position="142"/>
    </location>
</feature>
<feature type="binding site" evidence="4">
    <location>
        <position position="59"/>
    </location>
    <ligand>
        <name>O2</name>
        <dbReference type="ChEBI" id="CHEBI:15379"/>
    </ligand>
</feature>
<feature type="binding site" description="proximal binding residue" evidence="4">
    <location>
        <position position="88"/>
    </location>
    <ligand>
        <name>heme b</name>
        <dbReference type="ChEBI" id="CHEBI:60344"/>
    </ligand>
    <ligandPart>
        <name>Fe</name>
        <dbReference type="ChEBI" id="CHEBI:18248"/>
    </ligandPart>
</feature>
<feature type="modified residue" description="Phosphoserine" evidence="3">
    <location>
        <position position="4"/>
    </location>
</feature>
<feature type="modified residue" description="N6-succinyllysine" evidence="1">
    <location>
        <position position="8"/>
    </location>
</feature>
<feature type="modified residue" description="N6-succinyllysine" evidence="1">
    <location>
        <position position="12"/>
    </location>
</feature>
<feature type="modified residue" description="N6-acetyllysine; alternate" evidence="3">
    <location>
        <position position="17"/>
    </location>
</feature>
<feature type="modified residue" description="N6-succinyllysine; alternate" evidence="1">
    <location>
        <position position="17"/>
    </location>
</feature>
<feature type="modified residue" description="Phosphotyrosine" evidence="3">
    <location>
        <position position="25"/>
    </location>
</feature>
<feature type="modified residue" description="Phosphoserine" evidence="3">
    <location>
        <position position="36"/>
    </location>
</feature>
<feature type="modified residue" description="N6-succinyllysine" evidence="1">
    <location>
        <position position="41"/>
    </location>
</feature>
<feature type="modified residue" description="Phosphoserine" evidence="3">
    <location>
        <position position="50"/>
    </location>
</feature>
<feature type="modified residue" description="Phosphoserine" evidence="1">
    <location>
        <position position="103"/>
    </location>
</feature>
<feature type="modified residue" description="Phosphothreonine" evidence="1">
    <location>
        <position position="109"/>
    </location>
</feature>
<feature type="modified residue" description="Phosphoserine" evidence="1">
    <location>
        <position position="125"/>
    </location>
</feature>
<feature type="modified residue" description="Phosphothreonine" evidence="1">
    <location>
        <position position="135"/>
    </location>
</feature>
<feature type="modified residue" description="Phosphothreonine" evidence="1">
    <location>
        <position position="138"/>
    </location>
</feature>
<feature type="modified residue" description="Phosphoserine" evidence="1">
    <location>
        <position position="139"/>
    </location>
</feature>
<protein>
    <recommendedName>
        <fullName>Hemoglobin subunit alpha</fullName>
    </recommendedName>
    <alternativeName>
        <fullName>Alpha-globin</fullName>
    </alternativeName>
    <alternativeName>
        <fullName>Hemoglobin alpha chain</fullName>
    </alternativeName>
    <component>
        <recommendedName>
            <fullName evidence="2">Hemopressin</fullName>
        </recommendedName>
    </component>
</protein>
<name>HBA_PANON</name>
<reference key="1">
    <citation type="journal article" date="1987" name="Biol. Chem. Hoppe-Seyler">
        <title>The primary structure of the hemoglobins of the adult jaguar (Panthera onco, Carnivora).</title>
        <authorList>
            <person name="Ahmed A."/>
            <person name="Jahan M."/>
            <person name="Zaidi Z.H."/>
            <person name="Braunitzer G."/>
            <person name="Goeltenboth R."/>
        </authorList>
    </citation>
    <scope>PROTEIN SEQUENCE OF 2-142</scope>
</reference>
<dbReference type="PIR" id="S00521">
    <property type="entry name" value="HAJUA"/>
</dbReference>
<dbReference type="SMR" id="P63109"/>
<dbReference type="GO" id="GO:0072562">
    <property type="term" value="C:blood microparticle"/>
    <property type="evidence" value="ECO:0007669"/>
    <property type="project" value="TreeGrafter"/>
</dbReference>
<dbReference type="GO" id="GO:0031838">
    <property type="term" value="C:haptoglobin-hemoglobin complex"/>
    <property type="evidence" value="ECO:0007669"/>
    <property type="project" value="TreeGrafter"/>
</dbReference>
<dbReference type="GO" id="GO:0005833">
    <property type="term" value="C:hemoglobin complex"/>
    <property type="evidence" value="ECO:0007669"/>
    <property type="project" value="InterPro"/>
</dbReference>
<dbReference type="GO" id="GO:0031720">
    <property type="term" value="F:haptoglobin binding"/>
    <property type="evidence" value="ECO:0007669"/>
    <property type="project" value="TreeGrafter"/>
</dbReference>
<dbReference type="GO" id="GO:0020037">
    <property type="term" value="F:heme binding"/>
    <property type="evidence" value="ECO:0007669"/>
    <property type="project" value="InterPro"/>
</dbReference>
<dbReference type="GO" id="GO:0005506">
    <property type="term" value="F:iron ion binding"/>
    <property type="evidence" value="ECO:0007669"/>
    <property type="project" value="InterPro"/>
</dbReference>
<dbReference type="GO" id="GO:0043177">
    <property type="term" value="F:organic acid binding"/>
    <property type="evidence" value="ECO:0007669"/>
    <property type="project" value="TreeGrafter"/>
</dbReference>
<dbReference type="GO" id="GO:0019825">
    <property type="term" value="F:oxygen binding"/>
    <property type="evidence" value="ECO:0007669"/>
    <property type="project" value="InterPro"/>
</dbReference>
<dbReference type="GO" id="GO:0005344">
    <property type="term" value="F:oxygen carrier activity"/>
    <property type="evidence" value="ECO:0007669"/>
    <property type="project" value="UniProtKB-KW"/>
</dbReference>
<dbReference type="GO" id="GO:0004601">
    <property type="term" value="F:peroxidase activity"/>
    <property type="evidence" value="ECO:0007669"/>
    <property type="project" value="TreeGrafter"/>
</dbReference>
<dbReference type="GO" id="GO:0042744">
    <property type="term" value="P:hydrogen peroxide catabolic process"/>
    <property type="evidence" value="ECO:0007669"/>
    <property type="project" value="TreeGrafter"/>
</dbReference>
<dbReference type="CDD" id="cd08927">
    <property type="entry name" value="Hb-alpha-like"/>
    <property type="match status" value="1"/>
</dbReference>
<dbReference type="FunFam" id="1.10.490.10:FF:000002">
    <property type="entry name" value="Hemoglobin subunit alpha"/>
    <property type="match status" value="1"/>
</dbReference>
<dbReference type="Gene3D" id="1.10.490.10">
    <property type="entry name" value="Globins"/>
    <property type="match status" value="1"/>
</dbReference>
<dbReference type="InterPro" id="IPR000971">
    <property type="entry name" value="Globin"/>
</dbReference>
<dbReference type="InterPro" id="IPR009050">
    <property type="entry name" value="Globin-like_sf"/>
</dbReference>
<dbReference type="InterPro" id="IPR012292">
    <property type="entry name" value="Globin/Proto"/>
</dbReference>
<dbReference type="InterPro" id="IPR002338">
    <property type="entry name" value="Hemoglobin_a-typ"/>
</dbReference>
<dbReference type="InterPro" id="IPR050056">
    <property type="entry name" value="Hemoglobin_oxygen_transport"/>
</dbReference>
<dbReference type="InterPro" id="IPR002339">
    <property type="entry name" value="Hemoglobin_pi"/>
</dbReference>
<dbReference type="PANTHER" id="PTHR11442">
    <property type="entry name" value="HEMOGLOBIN FAMILY MEMBER"/>
    <property type="match status" value="1"/>
</dbReference>
<dbReference type="PANTHER" id="PTHR11442:SF48">
    <property type="entry name" value="HEMOGLOBIN SUBUNIT ALPHA"/>
    <property type="match status" value="1"/>
</dbReference>
<dbReference type="Pfam" id="PF00042">
    <property type="entry name" value="Globin"/>
    <property type="match status" value="1"/>
</dbReference>
<dbReference type="PRINTS" id="PR00612">
    <property type="entry name" value="ALPHAHAEM"/>
</dbReference>
<dbReference type="PRINTS" id="PR00815">
    <property type="entry name" value="PIHAEM"/>
</dbReference>
<dbReference type="SUPFAM" id="SSF46458">
    <property type="entry name" value="Globin-like"/>
    <property type="match status" value="1"/>
</dbReference>
<dbReference type="PROSITE" id="PS01033">
    <property type="entry name" value="GLOBIN"/>
    <property type="match status" value="1"/>
</dbReference>